<organism>
    <name type="scientific">Clostridium botulinum (strain Kyoto / Type A2)</name>
    <dbReference type="NCBI Taxonomy" id="536232"/>
    <lineage>
        <taxon>Bacteria</taxon>
        <taxon>Bacillati</taxon>
        <taxon>Bacillota</taxon>
        <taxon>Clostridia</taxon>
        <taxon>Eubacteriales</taxon>
        <taxon>Clostridiaceae</taxon>
        <taxon>Clostridium</taxon>
    </lineage>
</organism>
<reference key="1">
    <citation type="submission" date="2008-10" db="EMBL/GenBank/DDBJ databases">
        <title>Genome sequence of Clostridium botulinum A2 Kyoto.</title>
        <authorList>
            <person name="Shrivastava S."/>
            <person name="Brinkac L.M."/>
            <person name="Brown J.L."/>
            <person name="Bruce D."/>
            <person name="Detter C.C."/>
            <person name="Johnson E.A."/>
            <person name="Munk C.A."/>
            <person name="Smith L.A."/>
            <person name="Smith T.J."/>
            <person name="Sutton G."/>
            <person name="Brettin T.S."/>
        </authorList>
    </citation>
    <scope>NUCLEOTIDE SEQUENCE [LARGE SCALE GENOMIC DNA]</scope>
    <source>
        <strain>Kyoto / Type A2</strain>
    </source>
</reference>
<name>METK_CLOBJ</name>
<gene>
    <name evidence="1" type="primary">metK</name>
    <name type="ordered locus">CLM_0216</name>
</gene>
<keyword id="KW-0067">ATP-binding</keyword>
<keyword id="KW-0963">Cytoplasm</keyword>
<keyword id="KW-0460">Magnesium</keyword>
<keyword id="KW-0479">Metal-binding</keyword>
<keyword id="KW-0547">Nucleotide-binding</keyword>
<keyword id="KW-0554">One-carbon metabolism</keyword>
<keyword id="KW-0630">Potassium</keyword>
<keyword id="KW-0808">Transferase</keyword>
<protein>
    <recommendedName>
        <fullName evidence="1">S-adenosylmethionine synthase</fullName>
        <shortName evidence="1">AdoMet synthase</shortName>
        <ecNumber evidence="1">2.5.1.6</ecNumber>
    </recommendedName>
    <alternativeName>
        <fullName evidence="1">MAT</fullName>
    </alternativeName>
    <alternativeName>
        <fullName evidence="1">Methionine adenosyltransferase</fullName>
    </alternativeName>
</protein>
<comment type="function">
    <text evidence="1">Catalyzes the formation of S-adenosylmethionine (AdoMet) from methionine and ATP. The overall synthetic reaction is composed of two sequential steps, AdoMet formation and the subsequent tripolyphosphate hydrolysis which occurs prior to release of AdoMet from the enzyme.</text>
</comment>
<comment type="catalytic activity">
    <reaction evidence="1">
        <text>L-methionine + ATP + H2O = S-adenosyl-L-methionine + phosphate + diphosphate</text>
        <dbReference type="Rhea" id="RHEA:21080"/>
        <dbReference type="ChEBI" id="CHEBI:15377"/>
        <dbReference type="ChEBI" id="CHEBI:30616"/>
        <dbReference type="ChEBI" id="CHEBI:33019"/>
        <dbReference type="ChEBI" id="CHEBI:43474"/>
        <dbReference type="ChEBI" id="CHEBI:57844"/>
        <dbReference type="ChEBI" id="CHEBI:59789"/>
        <dbReference type="EC" id="2.5.1.6"/>
    </reaction>
</comment>
<comment type="cofactor">
    <cofactor evidence="1">
        <name>Mg(2+)</name>
        <dbReference type="ChEBI" id="CHEBI:18420"/>
    </cofactor>
    <text evidence="1">Binds 2 divalent ions per subunit.</text>
</comment>
<comment type="cofactor">
    <cofactor evidence="1">
        <name>K(+)</name>
        <dbReference type="ChEBI" id="CHEBI:29103"/>
    </cofactor>
    <text evidence="1">Binds 1 potassium ion per subunit.</text>
</comment>
<comment type="pathway">
    <text evidence="1">Amino-acid biosynthesis; S-adenosyl-L-methionine biosynthesis; S-adenosyl-L-methionine from L-methionine: step 1/1.</text>
</comment>
<comment type="subunit">
    <text evidence="1">Homotetramer; dimer of dimers.</text>
</comment>
<comment type="subcellular location">
    <subcellularLocation>
        <location evidence="1">Cytoplasm</location>
    </subcellularLocation>
</comment>
<comment type="similarity">
    <text evidence="1">Belongs to the AdoMet synthase family.</text>
</comment>
<sequence>MRKLFTSESVTEGHPDKICDQISDAVLDAILDKDPNGRVACETAVTTGMVMVMGEISTKCYVDIPKLVRETIRGIGYDRAKYGFDCETCSVITSIDEQSVDIAMGVDEALESKKGEMDKLDAVGAGDQGMMFGFATNETKEYMPMPIEMAHKLSRRLSEVRKNGTLPYLRPDGKTQVTVEYENGKPVRIDAIVISTQHGPEIYLEQIEKDIKEHVIKVIVPSELLDENTKYFINPTGRFVVGGPQGDSGLTGRKIIVDTYGGYGRHGGGAFSGKDPTKVDRSAAYAARWVAKNLVAAGVADKLEIQLAYAIGVAKPVSISVDTFGTGKMTDEEIVSIVNKVFDLRPGAIIRDLDLRRPIYKQVAAYGHFGRTDIDVPWERLDKVEEIKKHI</sequence>
<dbReference type="EC" id="2.5.1.6" evidence="1"/>
<dbReference type="EMBL" id="CP001581">
    <property type="protein sequence ID" value="ACO84607.1"/>
    <property type="molecule type" value="Genomic_DNA"/>
</dbReference>
<dbReference type="RefSeq" id="WP_003356813.1">
    <property type="nucleotide sequence ID" value="NC_012563.1"/>
</dbReference>
<dbReference type="SMR" id="C1FQQ5"/>
<dbReference type="KEGG" id="cby:CLM_0216"/>
<dbReference type="eggNOG" id="COG0192">
    <property type="taxonomic scope" value="Bacteria"/>
</dbReference>
<dbReference type="HOGENOM" id="CLU_041802_1_1_9"/>
<dbReference type="UniPathway" id="UPA00315">
    <property type="reaction ID" value="UER00080"/>
</dbReference>
<dbReference type="Proteomes" id="UP000001374">
    <property type="component" value="Chromosome"/>
</dbReference>
<dbReference type="GO" id="GO:0005737">
    <property type="term" value="C:cytoplasm"/>
    <property type="evidence" value="ECO:0007669"/>
    <property type="project" value="UniProtKB-SubCell"/>
</dbReference>
<dbReference type="GO" id="GO:0005524">
    <property type="term" value="F:ATP binding"/>
    <property type="evidence" value="ECO:0007669"/>
    <property type="project" value="UniProtKB-UniRule"/>
</dbReference>
<dbReference type="GO" id="GO:0000287">
    <property type="term" value="F:magnesium ion binding"/>
    <property type="evidence" value="ECO:0007669"/>
    <property type="project" value="UniProtKB-UniRule"/>
</dbReference>
<dbReference type="GO" id="GO:0004478">
    <property type="term" value="F:methionine adenosyltransferase activity"/>
    <property type="evidence" value="ECO:0007669"/>
    <property type="project" value="UniProtKB-UniRule"/>
</dbReference>
<dbReference type="GO" id="GO:0006730">
    <property type="term" value="P:one-carbon metabolic process"/>
    <property type="evidence" value="ECO:0007669"/>
    <property type="project" value="UniProtKB-KW"/>
</dbReference>
<dbReference type="GO" id="GO:0006556">
    <property type="term" value="P:S-adenosylmethionine biosynthetic process"/>
    <property type="evidence" value="ECO:0007669"/>
    <property type="project" value="UniProtKB-UniRule"/>
</dbReference>
<dbReference type="CDD" id="cd18079">
    <property type="entry name" value="S-AdoMet_synt"/>
    <property type="match status" value="1"/>
</dbReference>
<dbReference type="FunFam" id="3.30.300.10:FF:000003">
    <property type="entry name" value="S-adenosylmethionine synthase"/>
    <property type="match status" value="1"/>
</dbReference>
<dbReference type="FunFam" id="3.30.300.10:FF:000004">
    <property type="entry name" value="S-adenosylmethionine synthase"/>
    <property type="match status" value="1"/>
</dbReference>
<dbReference type="Gene3D" id="3.30.300.10">
    <property type="match status" value="3"/>
</dbReference>
<dbReference type="HAMAP" id="MF_00086">
    <property type="entry name" value="S_AdoMet_synth1"/>
    <property type="match status" value="1"/>
</dbReference>
<dbReference type="InterPro" id="IPR022631">
    <property type="entry name" value="ADOMET_SYNTHASE_CS"/>
</dbReference>
<dbReference type="InterPro" id="IPR022630">
    <property type="entry name" value="S-AdoMet_synt_C"/>
</dbReference>
<dbReference type="InterPro" id="IPR022629">
    <property type="entry name" value="S-AdoMet_synt_central"/>
</dbReference>
<dbReference type="InterPro" id="IPR022628">
    <property type="entry name" value="S-AdoMet_synt_N"/>
</dbReference>
<dbReference type="InterPro" id="IPR002133">
    <property type="entry name" value="S-AdoMet_synthetase"/>
</dbReference>
<dbReference type="InterPro" id="IPR022636">
    <property type="entry name" value="S-AdoMet_synthetase_sfam"/>
</dbReference>
<dbReference type="NCBIfam" id="TIGR01034">
    <property type="entry name" value="metK"/>
    <property type="match status" value="1"/>
</dbReference>
<dbReference type="PANTHER" id="PTHR11964">
    <property type="entry name" value="S-ADENOSYLMETHIONINE SYNTHETASE"/>
    <property type="match status" value="1"/>
</dbReference>
<dbReference type="Pfam" id="PF02773">
    <property type="entry name" value="S-AdoMet_synt_C"/>
    <property type="match status" value="1"/>
</dbReference>
<dbReference type="Pfam" id="PF02772">
    <property type="entry name" value="S-AdoMet_synt_M"/>
    <property type="match status" value="1"/>
</dbReference>
<dbReference type="Pfam" id="PF00438">
    <property type="entry name" value="S-AdoMet_synt_N"/>
    <property type="match status" value="1"/>
</dbReference>
<dbReference type="PIRSF" id="PIRSF000497">
    <property type="entry name" value="MAT"/>
    <property type="match status" value="1"/>
</dbReference>
<dbReference type="SUPFAM" id="SSF55973">
    <property type="entry name" value="S-adenosylmethionine synthetase"/>
    <property type="match status" value="3"/>
</dbReference>
<dbReference type="PROSITE" id="PS00376">
    <property type="entry name" value="ADOMET_SYNTHASE_1"/>
    <property type="match status" value="1"/>
</dbReference>
<dbReference type="PROSITE" id="PS00377">
    <property type="entry name" value="ADOMET_SYNTHASE_2"/>
    <property type="match status" value="1"/>
</dbReference>
<evidence type="ECO:0000255" key="1">
    <source>
        <dbReference type="HAMAP-Rule" id="MF_00086"/>
    </source>
</evidence>
<accession>C1FQQ5</accession>
<proteinExistence type="inferred from homology"/>
<feature type="chain" id="PRO_1000196697" description="S-adenosylmethionine synthase">
    <location>
        <begin position="1"/>
        <end position="391"/>
    </location>
</feature>
<feature type="region of interest" description="Flexible loop" evidence="1">
    <location>
        <begin position="98"/>
        <end position="108"/>
    </location>
</feature>
<feature type="binding site" description="in other chain" evidence="1">
    <location>
        <position position="14"/>
    </location>
    <ligand>
        <name>ATP</name>
        <dbReference type="ChEBI" id="CHEBI:30616"/>
        <note>ligand shared between two neighboring subunits</note>
    </ligand>
</feature>
<feature type="binding site" evidence="1">
    <location>
        <position position="16"/>
    </location>
    <ligand>
        <name>Mg(2+)</name>
        <dbReference type="ChEBI" id="CHEBI:18420"/>
    </ligand>
</feature>
<feature type="binding site" evidence="1">
    <location>
        <position position="42"/>
    </location>
    <ligand>
        <name>K(+)</name>
        <dbReference type="ChEBI" id="CHEBI:29103"/>
    </ligand>
</feature>
<feature type="binding site" description="in other chain" evidence="1">
    <location>
        <position position="55"/>
    </location>
    <ligand>
        <name>L-methionine</name>
        <dbReference type="ChEBI" id="CHEBI:57844"/>
        <note>ligand shared between two neighboring subunits</note>
    </ligand>
</feature>
<feature type="binding site" description="in other chain" evidence="1">
    <location>
        <position position="98"/>
    </location>
    <ligand>
        <name>L-methionine</name>
        <dbReference type="ChEBI" id="CHEBI:57844"/>
        <note>ligand shared between two neighboring subunits</note>
    </ligand>
</feature>
<feature type="binding site" description="in other chain" evidence="1">
    <location>
        <begin position="172"/>
        <end position="174"/>
    </location>
    <ligand>
        <name>ATP</name>
        <dbReference type="ChEBI" id="CHEBI:30616"/>
        <note>ligand shared between two neighboring subunits</note>
    </ligand>
</feature>
<feature type="binding site" description="in other chain" evidence="1">
    <location>
        <begin position="238"/>
        <end position="239"/>
    </location>
    <ligand>
        <name>ATP</name>
        <dbReference type="ChEBI" id="CHEBI:30616"/>
        <note>ligand shared between two neighboring subunits</note>
    </ligand>
</feature>
<feature type="binding site" evidence="1">
    <location>
        <position position="247"/>
    </location>
    <ligand>
        <name>ATP</name>
        <dbReference type="ChEBI" id="CHEBI:30616"/>
        <note>ligand shared between two neighboring subunits</note>
    </ligand>
</feature>
<feature type="binding site" evidence="1">
    <location>
        <position position="247"/>
    </location>
    <ligand>
        <name>L-methionine</name>
        <dbReference type="ChEBI" id="CHEBI:57844"/>
        <note>ligand shared between two neighboring subunits</note>
    </ligand>
</feature>
<feature type="binding site" description="in other chain" evidence="1">
    <location>
        <begin position="253"/>
        <end position="254"/>
    </location>
    <ligand>
        <name>ATP</name>
        <dbReference type="ChEBI" id="CHEBI:30616"/>
        <note>ligand shared between two neighboring subunits</note>
    </ligand>
</feature>
<feature type="binding site" evidence="1">
    <location>
        <position position="270"/>
    </location>
    <ligand>
        <name>ATP</name>
        <dbReference type="ChEBI" id="CHEBI:30616"/>
        <note>ligand shared between two neighboring subunits</note>
    </ligand>
</feature>
<feature type="binding site" evidence="1">
    <location>
        <position position="274"/>
    </location>
    <ligand>
        <name>ATP</name>
        <dbReference type="ChEBI" id="CHEBI:30616"/>
        <note>ligand shared between two neighboring subunits</note>
    </ligand>
</feature>
<feature type="binding site" description="in other chain" evidence="1">
    <location>
        <position position="278"/>
    </location>
    <ligand>
        <name>L-methionine</name>
        <dbReference type="ChEBI" id="CHEBI:57844"/>
        <note>ligand shared between two neighboring subunits</note>
    </ligand>
</feature>